<organism>
    <name type="scientific">Shewanella putrefaciens (strain CN-32 / ATCC BAA-453)</name>
    <dbReference type="NCBI Taxonomy" id="319224"/>
    <lineage>
        <taxon>Bacteria</taxon>
        <taxon>Pseudomonadati</taxon>
        <taxon>Pseudomonadota</taxon>
        <taxon>Gammaproteobacteria</taxon>
        <taxon>Alteromonadales</taxon>
        <taxon>Shewanellaceae</taxon>
        <taxon>Shewanella</taxon>
    </lineage>
</organism>
<gene>
    <name evidence="1" type="primary">cmk</name>
    <name type="ordered locus">Sputcn32_2043</name>
</gene>
<keyword id="KW-0067">ATP-binding</keyword>
<keyword id="KW-0963">Cytoplasm</keyword>
<keyword id="KW-0418">Kinase</keyword>
<keyword id="KW-0547">Nucleotide-binding</keyword>
<keyword id="KW-0808">Transferase</keyword>
<evidence type="ECO:0000255" key="1">
    <source>
        <dbReference type="HAMAP-Rule" id="MF_00238"/>
    </source>
</evidence>
<proteinExistence type="inferred from homology"/>
<sequence>MSERAPVVTIDGPSGAGKGTISQLLAQHLGWQLLDSGAIYRVLALAAIHHDVELENEESITLLAAHLDVKFLTGNDKDPVQVILEGEDVTTDIRTQECSNAASKVAAFPRVREALLRRQRAFRTAPGLIADGRDMGTVVFPTAPAKLYLTASAEERAQRRYNQLQDKGFDVNIERLLSEIIERDERDMNRPVAPLVPAEDAFVIDTSGKGIDEVLELALKYINEKLSSAN</sequence>
<protein>
    <recommendedName>
        <fullName evidence="1">Cytidylate kinase</fullName>
        <shortName evidence="1">CK</shortName>
        <ecNumber evidence="1">2.7.4.25</ecNumber>
    </recommendedName>
    <alternativeName>
        <fullName evidence="1">Cytidine monophosphate kinase</fullName>
        <shortName evidence="1">CMP kinase</shortName>
    </alternativeName>
</protein>
<feature type="chain" id="PRO_1000048277" description="Cytidylate kinase">
    <location>
        <begin position="1"/>
        <end position="230"/>
    </location>
</feature>
<feature type="binding site" evidence="1">
    <location>
        <begin position="12"/>
        <end position="20"/>
    </location>
    <ligand>
        <name>ATP</name>
        <dbReference type="ChEBI" id="CHEBI:30616"/>
    </ligand>
</feature>
<dbReference type="EC" id="2.7.4.25" evidence="1"/>
<dbReference type="EMBL" id="CP000681">
    <property type="protein sequence ID" value="ABP75764.1"/>
    <property type="molecule type" value="Genomic_DNA"/>
</dbReference>
<dbReference type="SMR" id="A4Y731"/>
<dbReference type="STRING" id="319224.Sputcn32_2043"/>
<dbReference type="KEGG" id="spc:Sputcn32_2043"/>
<dbReference type="eggNOG" id="COG0283">
    <property type="taxonomic scope" value="Bacteria"/>
</dbReference>
<dbReference type="HOGENOM" id="CLU_079959_2_0_6"/>
<dbReference type="GO" id="GO:0005829">
    <property type="term" value="C:cytosol"/>
    <property type="evidence" value="ECO:0007669"/>
    <property type="project" value="TreeGrafter"/>
</dbReference>
<dbReference type="GO" id="GO:0005524">
    <property type="term" value="F:ATP binding"/>
    <property type="evidence" value="ECO:0007669"/>
    <property type="project" value="UniProtKB-UniRule"/>
</dbReference>
<dbReference type="GO" id="GO:0036430">
    <property type="term" value="F:CMP kinase activity"/>
    <property type="evidence" value="ECO:0007669"/>
    <property type="project" value="RHEA"/>
</dbReference>
<dbReference type="GO" id="GO:0036431">
    <property type="term" value="F:dCMP kinase activity"/>
    <property type="evidence" value="ECO:0007669"/>
    <property type="project" value="RHEA"/>
</dbReference>
<dbReference type="GO" id="GO:0015949">
    <property type="term" value="P:nucleobase-containing small molecule interconversion"/>
    <property type="evidence" value="ECO:0007669"/>
    <property type="project" value="TreeGrafter"/>
</dbReference>
<dbReference type="GO" id="GO:0006220">
    <property type="term" value="P:pyrimidine nucleotide metabolic process"/>
    <property type="evidence" value="ECO:0007669"/>
    <property type="project" value="UniProtKB-UniRule"/>
</dbReference>
<dbReference type="CDD" id="cd02020">
    <property type="entry name" value="CMPK"/>
    <property type="match status" value="1"/>
</dbReference>
<dbReference type="FunFam" id="3.40.50.300:FF:000262">
    <property type="entry name" value="Cytidylate kinase"/>
    <property type="match status" value="1"/>
</dbReference>
<dbReference type="Gene3D" id="3.40.50.300">
    <property type="entry name" value="P-loop containing nucleotide triphosphate hydrolases"/>
    <property type="match status" value="1"/>
</dbReference>
<dbReference type="HAMAP" id="MF_00238">
    <property type="entry name" value="Cytidyl_kinase_type1"/>
    <property type="match status" value="1"/>
</dbReference>
<dbReference type="InterPro" id="IPR003136">
    <property type="entry name" value="Cytidylate_kin"/>
</dbReference>
<dbReference type="InterPro" id="IPR011994">
    <property type="entry name" value="Cytidylate_kinase_dom"/>
</dbReference>
<dbReference type="InterPro" id="IPR027417">
    <property type="entry name" value="P-loop_NTPase"/>
</dbReference>
<dbReference type="NCBIfam" id="TIGR00017">
    <property type="entry name" value="cmk"/>
    <property type="match status" value="1"/>
</dbReference>
<dbReference type="PANTHER" id="PTHR21299:SF2">
    <property type="entry name" value="CYTIDYLATE KINASE"/>
    <property type="match status" value="1"/>
</dbReference>
<dbReference type="PANTHER" id="PTHR21299">
    <property type="entry name" value="CYTIDYLATE KINASE/PANTOATE-BETA-ALANINE LIGASE"/>
    <property type="match status" value="1"/>
</dbReference>
<dbReference type="Pfam" id="PF02224">
    <property type="entry name" value="Cytidylate_kin"/>
    <property type="match status" value="1"/>
</dbReference>
<dbReference type="SUPFAM" id="SSF52540">
    <property type="entry name" value="P-loop containing nucleoside triphosphate hydrolases"/>
    <property type="match status" value="1"/>
</dbReference>
<reference key="1">
    <citation type="submission" date="2007-04" db="EMBL/GenBank/DDBJ databases">
        <title>Complete sequence of Shewanella putrefaciens CN-32.</title>
        <authorList>
            <consortium name="US DOE Joint Genome Institute"/>
            <person name="Copeland A."/>
            <person name="Lucas S."/>
            <person name="Lapidus A."/>
            <person name="Barry K."/>
            <person name="Detter J.C."/>
            <person name="Glavina del Rio T."/>
            <person name="Hammon N."/>
            <person name="Israni S."/>
            <person name="Dalin E."/>
            <person name="Tice H."/>
            <person name="Pitluck S."/>
            <person name="Chain P."/>
            <person name="Malfatti S."/>
            <person name="Shin M."/>
            <person name="Vergez L."/>
            <person name="Schmutz J."/>
            <person name="Larimer F."/>
            <person name="Land M."/>
            <person name="Hauser L."/>
            <person name="Kyrpides N."/>
            <person name="Mikhailova N."/>
            <person name="Romine M.F."/>
            <person name="Fredrickson J."/>
            <person name="Tiedje J."/>
            <person name="Richardson P."/>
        </authorList>
    </citation>
    <scope>NUCLEOTIDE SEQUENCE [LARGE SCALE GENOMIC DNA]</scope>
    <source>
        <strain>CN-32 / ATCC BAA-453</strain>
    </source>
</reference>
<accession>A4Y731</accession>
<name>KCY_SHEPC</name>
<comment type="catalytic activity">
    <reaction evidence="1">
        <text>CMP + ATP = CDP + ADP</text>
        <dbReference type="Rhea" id="RHEA:11600"/>
        <dbReference type="ChEBI" id="CHEBI:30616"/>
        <dbReference type="ChEBI" id="CHEBI:58069"/>
        <dbReference type="ChEBI" id="CHEBI:60377"/>
        <dbReference type="ChEBI" id="CHEBI:456216"/>
        <dbReference type="EC" id="2.7.4.25"/>
    </reaction>
</comment>
<comment type="catalytic activity">
    <reaction evidence="1">
        <text>dCMP + ATP = dCDP + ADP</text>
        <dbReference type="Rhea" id="RHEA:25094"/>
        <dbReference type="ChEBI" id="CHEBI:30616"/>
        <dbReference type="ChEBI" id="CHEBI:57566"/>
        <dbReference type="ChEBI" id="CHEBI:58593"/>
        <dbReference type="ChEBI" id="CHEBI:456216"/>
        <dbReference type="EC" id="2.7.4.25"/>
    </reaction>
</comment>
<comment type="subcellular location">
    <subcellularLocation>
        <location evidence="1">Cytoplasm</location>
    </subcellularLocation>
</comment>
<comment type="similarity">
    <text evidence="1">Belongs to the cytidylate kinase family. Type 1 subfamily.</text>
</comment>